<evidence type="ECO:0000255" key="1">
    <source>
        <dbReference type="HAMAP-Rule" id="MF_01643"/>
    </source>
</evidence>
<reference key="1">
    <citation type="journal article" date="2009" name="Genome Res.">
        <title>Newly introduced genomic prophage islands are critical determinants of in vivo competitiveness in the Liverpool epidemic strain of Pseudomonas aeruginosa.</title>
        <authorList>
            <person name="Winstanley C."/>
            <person name="Langille M.G.I."/>
            <person name="Fothergill J.L."/>
            <person name="Kukavica-Ibrulj I."/>
            <person name="Paradis-Bleau C."/>
            <person name="Sanschagrin F."/>
            <person name="Thomson N.R."/>
            <person name="Winsor G.L."/>
            <person name="Quail M.A."/>
            <person name="Lennard N."/>
            <person name="Bignell A."/>
            <person name="Clarke L."/>
            <person name="Seeger K."/>
            <person name="Saunders D."/>
            <person name="Harris D."/>
            <person name="Parkhill J."/>
            <person name="Hancock R.E.W."/>
            <person name="Brinkman F.S.L."/>
            <person name="Levesque R.C."/>
        </authorList>
    </citation>
    <scope>NUCLEOTIDE SEQUENCE [LARGE SCALE GENOMIC DNA]</scope>
    <source>
        <strain>LESB58</strain>
    </source>
</reference>
<gene>
    <name evidence="1" type="primary">purT</name>
    <name type="ordered locus">PLES_12291</name>
</gene>
<protein>
    <recommendedName>
        <fullName evidence="1">Formate-dependent phosphoribosylglycinamide formyltransferase</fullName>
        <ecNumber evidence="1">6.3.1.21</ecNumber>
    </recommendedName>
    <alternativeName>
        <fullName evidence="1">5'-phosphoribosylglycinamide transformylase 2</fullName>
    </alternativeName>
    <alternativeName>
        <fullName evidence="1">Formate-dependent GAR transformylase</fullName>
    </alternativeName>
    <alternativeName>
        <fullName evidence="1">GAR transformylase 2</fullName>
        <shortName evidence="1">GART 2</shortName>
    </alternativeName>
    <alternativeName>
        <fullName evidence="1">Non-folate glycinamide ribonucleotide transformylase</fullName>
    </alternativeName>
    <alternativeName>
        <fullName evidence="1">Phosphoribosylglycinamide formyltransferase 2</fullName>
    </alternativeName>
</protein>
<keyword id="KW-0067">ATP-binding</keyword>
<keyword id="KW-0436">Ligase</keyword>
<keyword id="KW-0460">Magnesium</keyword>
<keyword id="KW-0479">Metal-binding</keyword>
<keyword id="KW-0547">Nucleotide-binding</keyword>
<keyword id="KW-0658">Purine biosynthesis</keyword>
<feature type="chain" id="PRO_1000186887" description="Formate-dependent phosphoribosylglycinamide formyltransferase">
    <location>
        <begin position="1"/>
        <end position="393"/>
    </location>
</feature>
<feature type="domain" description="ATP-grasp" evidence="1">
    <location>
        <begin position="119"/>
        <end position="308"/>
    </location>
</feature>
<feature type="binding site" evidence="1">
    <location>
        <begin position="22"/>
        <end position="23"/>
    </location>
    <ligand>
        <name>N(1)-(5-phospho-beta-D-ribosyl)glycinamide</name>
        <dbReference type="ChEBI" id="CHEBI:143788"/>
    </ligand>
</feature>
<feature type="binding site" evidence="1">
    <location>
        <position position="82"/>
    </location>
    <ligand>
        <name>N(1)-(5-phospho-beta-D-ribosyl)glycinamide</name>
        <dbReference type="ChEBI" id="CHEBI:143788"/>
    </ligand>
</feature>
<feature type="binding site" evidence="1">
    <location>
        <position position="114"/>
    </location>
    <ligand>
        <name>ATP</name>
        <dbReference type="ChEBI" id="CHEBI:30616"/>
    </ligand>
</feature>
<feature type="binding site" evidence="1">
    <location>
        <position position="155"/>
    </location>
    <ligand>
        <name>ATP</name>
        <dbReference type="ChEBI" id="CHEBI:30616"/>
    </ligand>
</feature>
<feature type="binding site" evidence="1">
    <location>
        <begin position="160"/>
        <end position="165"/>
    </location>
    <ligand>
        <name>ATP</name>
        <dbReference type="ChEBI" id="CHEBI:30616"/>
    </ligand>
</feature>
<feature type="binding site" evidence="1">
    <location>
        <begin position="195"/>
        <end position="198"/>
    </location>
    <ligand>
        <name>ATP</name>
        <dbReference type="ChEBI" id="CHEBI:30616"/>
    </ligand>
</feature>
<feature type="binding site" evidence="1">
    <location>
        <position position="203"/>
    </location>
    <ligand>
        <name>ATP</name>
        <dbReference type="ChEBI" id="CHEBI:30616"/>
    </ligand>
</feature>
<feature type="binding site" evidence="1">
    <location>
        <position position="267"/>
    </location>
    <ligand>
        <name>Mg(2+)</name>
        <dbReference type="ChEBI" id="CHEBI:18420"/>
    </ligand>
</feature>
<feature type="binding site" evidence="1">
    <location>
        <position position="279"/>
    </location>
    <ligand>
        <name>Mg(2+)</name>
        <dbReference type="ChEBI" id="CHEBI:18420"/>
    </ligand>
</feature>
<feature type="binding site" evidence="1">
    <location>
        <position position="286"/>
    </location>
    <ligand>
        <name>N(1)-(5-phospho-beta-D-ribosyl)glycinamide</name>
        <dbReference type="ChEBI" id="CHEBI:143788"/>
    </ligand>
</feature>
<feature type="binding site" evidence="1">
    <location>
        <position position="356"/>
    </location>
    <ligand>
        <name>N(1)-(5-phospho-beta-D-ribosyl)glycinamide</name>
        <dbReference type="ChEBI" id="CHEBI:143788"/>
    </ligand>
</feature>
<feature type="binding site" evidence="1">
    <location>
        <begin position="363"/>
        <end position="364"/>
    </location>
    <ligand>
        <name>N(1)-(5-phospho-beta-D-ribosyl)glycinamide</name>
        <dbReference type="ChEBI" id="CHEBI:143788"/>
    </ligand>
</feature>
<organism>
    <name type="scientific">Pseudomonas aeruginosa (strain LESB58)</name>
    <dbReference type="NCBI Taxonomy" id="557722"/>
    <lineage>
        <taxon>Bacteria</taxon>
        <taxon>Pseudomonadati</taxon>
        <taxon>Pseudomonadota</taxon>
        <taxon>Gammaproteobacteria</taxon>
        <taxon>Pseudomonadales</taxon>
        <taxon>Pseudomonadaceae</taxon>
        <taxon>Pseudomonas</taxon>
    </lineage>
</organism>
<name>PURT_PSEA8</name>
<dbReference type="EC" id="6.3.1.21" evidence="1"/>
<dbReference type="EMBL" id="FM209186">
    <property type="protein sequence ID" value="CAW25956.1"/>
    <property type="molecule type" value="Genomic_DNA"/>
</dbReference>
<dbReference type="RefSeq" id="WP_003092658.1">
    <property type="nucleotide sequence ID" value="NC_011770.1"/>
</dbReference>
<dbReference type="SMR" id="B7UYK0"/>
<dbReference type="KEGG" id="pag:PLES_12291"/>
<dbReference type="HOGENOM" id="CLU_011534_1_3_6"/>
<dbReference type="UniPathway" id="UPA00074">
    <property type="reaction ID" value="UER00127"/>
</dbReference>
<dbReference type="GO" id="GO:0005829">
    <property type="term" value="C:cytosol"/>
    <property type="evidence" value="ECO:0007669"/>
    <property type="project" value="TreeGrafter"/>
</dbReference>
<dbReference type="GO" id="GO:0005524">
    <property type="term" value="F:ATP binding"/>
    <property type="evidence" value="ECO:0007669"/>
    <property type="project" value="UniProtKB-UniRule"/>
</dbReference>
<dbReference type="GO" id="GO:0000287">
    <property type="term" value="F:magnesium ion binding"/>
    <property type="evidence" value="ECO:0007669"/>
    <property type="project" value="InterPro"/>
</dbReference>
<dbReference type="GO" id="GO:0043815">
    <property type="term" value="F:phosphoribosylglycinamide formyltransferase 2 activity"/>
    <property type="evidence" value="ECO:0007669"/>
    <property type="project" value="UniProtKB-UniRule"/>
</dbReference>
<dbReference type="GO" id="GO:0004644">
    <property type="term" value="F:phosphoribosylglycinamide formyltransferase activity"/>
    <property type="evidence" value="ECO:0007669"/>
    <property type="project" value="InterPro"/>
</dbReference>
<dbReference type="GO" id="GO:0006189">
    <property type="term" value="P:'de novo' IMP biosynthetic process"/>
    <property type="evidence" value="ECO:0007669"/>
    <property type="project" value="UniProtKB-UniRule"/>
</dbReference>
<dbReference type="FunFam" id="3.30.1490.20:FF:000013">
    <property type="entry name" value="Formate-dependent phosphoribosylglycinamide formyltransferase"/>
    <property type="match status" value="1"/>
</dbReference>
<dbReference type="FunFam" id="3.30.470.20:FF:000027">
    <property type="entry name" value="Formate-dependent phosphoribosylglycinamide formyltransferase"/>
    <property type="match status" value="1"/>
</dbReference>
<dbReference type="FunFam" id="3.40.50.20:FF:000007">
    <property type="entry name" value="Formate-dependent phosphoribosylglycinamide formyltransferase"/>
    <property type="match status" value="1"/>
</dbReference>
<dbReference type="Gene3D" id="3.40.50.20">
    <property type="match status" value="1"/>
</dbReference>
<dbReference type="Gene3D" id="3.30.1490.20">
    <property type="entry name" value="ATP-grasp fold, A domain"/>
    <property type="match status" value="1"/>
</dbReference>
<dbReference type="Gene3D" id="3.30.470.20">
    <property type="entry name" value="ATP-grasp fold, B domain"/>
    <property type="match status" value="1"/>
</dbReference>
<dbReference type="HAMAP" id="MF_01643">
    <property type="entry name" value="PurT"/>
    <property type="match status" value="1"/>
</dbReference>
<dbReference type="InterPro" id="IPR011761">
    <property type="entry name" value="ATP-grasp"/>
</dbReference>
<dbReference type="InterPro" id="IPR003135">
    <property type="entry name" value="ATP-grasp_carboxylate-amine"/>
</dbReference>
<dbReference type="InterPro" id="IPR013815">
    <property type="entry name" value="ATP_grasp_subdomain_1"/>
</dbReference>
<dbReference type="InterPro" id="IPR016185">
    <property type="entry name" value="PreATP-grasp_dom_sf"/>
</dbReference>
<dbReference type="InterPro" id="IPR005862">
    <property type="entry name" value="PurT"/>
</dbReference>
<dbReference type="InterPro" id="IPR054350">
    <property type="entry name" value="PurT/PurK_preATP-grasp"/>
</dbReference>
<dbReference type="InterPro" id="IPR048740">
    <property type="entry name" value="PurT_C"/>
</dbReference>
<dbReference type="NCBIfam" id="NF006766">
    <property type="entry name" value="PRK09288.1"/>
    <property type="match status" value="1"/>
</dbReference>
<dbReference type="NCBIfam" id="TIGR01142">
    <property type="entry name" value="purT"/>
    <property type="match status" value="1"/>
</dbReference>
<dbReference type="PANTHER" id="PTHR43055">
    <property type="entry name" value="FORMATE-DEPENDENT PHOSPHORIBOSYLGLYCINAMIDE FORMYLTRANSFERASE"/>
    <property type="match status" value="1"/>
</dbReference>
<dbReference type="PANTHER" id="PTHR43055:SF1">
    <property type="entry name" value="FORMATE-DEPENDENT PHOSPHORIBOSYLGLYCINAMIDE FORMYLTRANSFERASE"/>
    <property type="match status" value="1"/>
</dbReference>
<dbReference type="Pfam" id="PF02222">
    <property type="entry name" value="ATP-grasp"/>
    <property type="match status" value="1"/>
</dbReference>
<dbReference type="Pfam" id="PF21244">
    <property type="entry name" value="PurT_C"/>
    <property type="match status" value="1"/>
</dbReference>
<dbReference type="Pfam" id="PF22660">
    <property type="entry name" value="RS_preATP-grasp-like"/>
    <property type="match status" value="1"/>
</dbReference>
<dbReference type="SUPFAM" id="SSF56059">
    <property type="entry name" value="Glutathione synthetase ATP-binding domain-like"/>
    <property type="match status" value="1"/>
</dbReference>
<dbReference type="SUPFAM" id="SSF52440">
    <property type="entry name" value="PreATP-grasp domain"/>
    <property type="match status" value="1"/>
</dbReference>
<dbReference type="PROSITE" id="PS50975">
    <property type="entry name" value="ATP_GRASP"/>
    <property type="match status" value="1"/>
</dbReference>
<proteinExistence type="inferred from homology"/>
<comment type="function">
    <text evidence="1">Involved in the de novo purine biosynthesis. Catalyzes the transfer of formate to 5-phospho-ribosyl-glycinamide (GAR), producing 5-phospho-ribosyl-N-formylglycinamide (FGAR). Formate is provided by PurU via hydrolysis of 10-formyl-tetrahydrofolate.</text>
</comment>
<comment type="catalytic activity">
    <reaction evidence="1">
        <text>N(1)-(5-phospho-beta-D-ribosyl)glycinamide + formate + ATP = N(2)-formyl-N(1)-(5-phospho-beta-D-ribosyl)glycinamide + ADP + phosphate + H(+)</text>
        <dbReference type="Rhea" id="RHEA:24829"/>
        <dbReference type="ChEBI" id="CHEBI:15378"/>
        <dbReference type="ChEBI" id="CHEBI:15740"/>
        <dbReference type="ChEBI" id="CHEBI:30616"/>
        <dbReference type="ChEBI" id="CHEBI:43474"/>
        <dbReference type="ChEBI" id="CHEBI:143788"/>
        <dbReference type="ChEBI" id="CHEBI:147286"/>
        <dbReference type="ChEBI" id="CHEBI:456216"/>
        <dbReference type="EC" id="6.3.1.21"/>
    </reaction>
    <physiologicalReaction direction="left-to-right" evidence="1">
        <dbReference type="Rhea" id="RHEA:24830"/>
    </physiologicalReaction>
</comment>
<comment type="pathway">
    <text evidence="1">Purine metabolism; IMP biosynthesis via de novo pathway; N(2)-formyl-N(1)-(5-phospho-D-ribosyl)glycinamide from N(1)-(5-phospho-D-ribosyl)glycinamide (formate route): step 1/1.</text>
</comment>
<comment type="subunit">
    <text evidence="1">Homodimer.</text>
</comment>
<comment type="similarity">
    <text evidence="1">Belongs to the PurK/PurT family.</text>
</comment>
<sequence>MTRIGTPLSPSATRVLLCGSGELGKEVAIELQRLGCEVIAVDRYGNAPAMQVAHRSHVISMLDGAALRAVIEQEKPHYIVPEIEAIATATLVELEAEGYTVVPTARAAQLTMNREGIRRLAAEELGLPTSPYHFADTFEDYRRGVERVGYPCVVKPIMSSSGKGQSVLKGPDDLQAAWDYAQEGGRAGKGRVIVEGFIDFDYEITLLTVRHVDGTTFCAPIGHRQVKGDYHESWQPQAMSAQALAESERVARAVTEALGGRGLFGVELFVKGDQVWFSEVSPRPHDTGLVTLISQDLSEFALHARAILGLPIPVIRQLGPSASAVILVEGKSRQVAFANLGAALSEADTALRLFGKPEVDGQRRMGVALARDESIDAARAKATRAAQAVRVEL</sequence>
<accession>B7UYK0</accession>